<evidence type="ECO:0000255" key="1">
    <source>
        <dbReference type="HAMAP-Rule" id="MF_00102"/>
    </source>
</evidence>
<evidence type="ECO:0000305" key="2"/>
<accession>Q6MRM8</accession>
<comment type="function">
    <text evidence="1">Catalyzes the conversion of 4-hydroxy-tetrahydrodipicolinate (HTPA) to tetrahydrodipicolinate.</text>
</comment>
<comment type="catalytic activity">
    <reaction evidence="1">
        <text>(S)-2,3,4,5-tetrahydrodipicolinate + NAD(+) + H2O = (2S,4S)-4-hydroxy-2,3,4,5-tetrahydrodipicolinate + NADH + H(+)</text>
        <dbReference type="Rhea" id="RHEA:35323"/>
        <dbReference type="ChEBI" id="CHEBI:15377"/>
        <dbReference type="ChEBI" id="CHEBI:15378"/>
        <dbReference type="ChEBI" id="CHEBI:16845"/>
        <dbReference type="ChEBI" id="CHEBI:57540"/>
        <dbReference type="ChEBI" id="CHEBI:57945"/>
        <dbReference type="ChEBI" id="CHEBI:67139"/>
        <dbReference type="EC" id="1.17.1.8"/>
    </reaction>
</comment>
<comment type="catalytic activity">
    <reaction evidence="1">
        <text>(S)-2,3,4,5-tetrahydrodipicolinate + NADP(+) + H2O = (2S,4S)-4-hydroxy-2,3,4,5-tetrahydrodipicolinate + NADPH + H(+)</text>
        <dbReference type="Rhea" id="RHEA:35331"/>
        <dbReference type="ChEBI" id="CHEBI:15377"/>
        <dbReference type="ChEBI" id="CHEBI:15378"/>
        <dbReference type="ChEBI" id="CHEBI:16845"/>
        <dbReference type="ChEBI" id="CHEBI:57783"/>
        <dbReference type="ChEBI" id="CHEBI:58349"/>
        <dbReference type="ChEBI" id="CHEBI:67139"/>
        <dbReference type="EC" id="1.17.1.8"/>
    </reaction>
</comment>
<comment type="pathway">
    <text evidence="1">Amino-acid biosynthesis; L-lysine biosynthesis via DAP pathway; (S)-tetrahydrodipicolinate from L-aspartate: step 4/4.</text>
</comment>
<comment type="subcellular location">
    <subcellularLocation>
        <location evidence="1">Cytoplasm</location>
    </subcellularLocation>
</comment>
<comment type="similarity">
    <text evidence="1">Belongs to the DapB family.</text>
</comment>
<comment type="caution">
    <text evidence="2">Was originally thought to be a dihydrodipicolinate reductase (DHDPR), catalyzing the conversion of dihydrodipicolinate to tetrahydrodipicolinate. However, it was shown in E.coli that the substrate of the enzymatic reaction is not dihydrodipicolinate (DHDP) but in fact (2S,4S)-4-hydroxy-2,3,4,5-tetrahydrodipicolinic acid (HTPA), the product released by the DapA-catalyzed reaction.</text>
</comment>
<keyword id="KW-0028">Amino-acid biosynthesis</keyword>
<keyword id="KW-0963">Cytoplasm</keyword>
<keyword id="KW-0220">Diaminopimelate biosynthesis</keyword>
<keyword id="KW-0457">Lysine biosynthesis</keyword>
<keyword id="KW-0520">NAD</keyword>
<keyword id="KW-0521">NADP</keyword>
<keyword id="KW-0560">Oxidoreductase</keyword>
<keyword id="KW-1185">Reference proteome</keyword>
<sequence>MKKIKIGLMGSAGRMGQEIAGVIEANPRCELVYAPLRGEKWDSKKAQAVDVWIDFTSPEALKDILKKASETKTPVVCGTTGFSKKEKELLKTYSKKIPVLWSSNMSLGVAVLNEALKAFSAISHFDFQIEEIHHNRKKDRPSGTAITLQENLEKAVDKKLPEALAIRGGGVFGVHKIFAMSDEEVLTFEHTALNRTVFAKGSVQAAEWLVKQKPGLYQIRDVLFGKSKK</sequence>
<gene>
    <name evidence="1" type="primary">dapB</name>
    <name type="ordered locus">Bd0047</name>
</gene>
<reference key="1">
    <citation type="journal article" date="2004" name="Science">
        <title>A predator unmasked: life cycle of Bdellovibrio bacteriovorus from a genomic perspective.</title>
        <authorList>
            <person name="Rendulic S."/>
            <person name="Jagtap P."/>
            <person name="Rosinus A."/>
            <person name="Eppinger M."/>
            <person name="Baar C."/>
            <person name="Lanz C."/>
            <person name="Keller H."/>
            <person name="Lambert C."/>
            <person name="Evans K.J."/>
            <person name="Goesmann A."/>
            <person name="Meyer F."/>
            <person name="Sockett R.E."/>
            <person name="Schuster S.C."/>
        </authorList>
    </citation>
    <scope>NUCLEOTIDE SEQUENCE [LARGE SCALE GENOMIC DNA]</scope>
    <source>
        <strain>ATCC 15356 / DSM 50701 / NCIMB 9529 / HD100</strain>
    </source>
</reference>
<name>DAPB_BDEBA</name>
<feature type="chain" id="PRO_0000228328" description="4-hydroxy-tetrahydrodipicolinate reductase">
    <location>
        <begin position="1"/>
        <end position="229"/>
    </location>
</feature>
<feature type="active site" description="Proton donor/acceptor" evidence="1">
    <location>
        <position position="133"/>
    </location>
</feature>
<feature type="active site" description="Proton donor" evidence="1">
    <location>
        <position position="137"/>
    </location>
</feature>
<feature type="binding site" evidence="1">
    <location>
        <begin position="10"/>
        <end position="15"/>
    </location>
    <ligand>
        <name>NAD(+)</name>
        <dbReference type="ChEBI" id="CHEBI:57540"/>
    </ligand>
</feature>
<feature type="binding site" evidence="1">
    <location>
        <begin position="78"/>
        <end position="80"/>
    </location>
    <ligand>
        <name>NAD(+)</name>
        <dbReference type="ChEBI" id="CHEBI:57540"/>
    </ligand>
</feature>
<feature type="binding site" evidence="1">
    <location>
        <begin position="102"/>
        <end position="105"/>
    </location>
    <ligand>
        <name>NAD(+)</name>
        <dbReference type="ChEBI" id="CHEBI:57540"/>
    </ligand>
</feature>
<feature type="binding site" evidence="1">
    <location>
        <position position="134"/>
    </location>
    <ligand>
        <name>(S)-2,3,4,5-tetrahydrodipicolinate</name>
        <dbReference type="ChEBI" id="CHEBI:16845"/>
    </ligand>
</feature>
<feature type="binding site" evidence="1">
    <location>
        <begin position="143"/>
        <end position="144"/>
    </location>
    <ligand>
        <name>(S)-2,3,4,5-tetrahydrodipicolinate</name>
        <dbReference type="ChEBI" id="CHEBI:16845"/>
    </ligand>
</feature>
<dbReference type="EC" id="1.17.1.8" evidence="1"/>
<dbReference type="EMBL" id="BX842646">
    <property type="protein sequence ID" value="CAE77729.1"/>
    <property type="molecule type" value="Genomic_DNA"/>
</dbReference>
<dbReference type="RefSeq" id="WP_011162670.1">
    <property type="nucleotide sequence ID" value="NC_005363.1"/>
</dbReference>
<dbReference type="SMR" id="Q6MRM8"/>
<dbReference type="STRING" id="264462.Bd0047"/>
<dbReference type="GeneID" id="93011200"/>
<dbReference type="KEGG" id="bba:Bd0047"/>
<dbReference type="eggNOG" id="COG0289">
    <property type="taxonomic scope" value="Bacteria"/>
</dbReference>
<dbReference type="HOGENOM" id="CLU_047479_2_2_7"/>
<dbReference type="UniPathway" id="UPA00034">
    <property type="reaction ID" value="UER00018"/>
</dbReference>
<dbReference type="Proteomes" id="UP000008080">
    <property type="component" value="Chromosome"/>
</dbReference>
<dbReference type="GO" id="GO:0005829">
    <property type="term" value="C:cytosol"/>
    <property type="evidence" value="ECO:0007669"/>
    <property type="project" value="TreeGrafter"/>
</dbReference>
<dbReference type="GO" id="GO:0008839">
    <property type="term" value="F:4-hydroxy-tetrahydrodipicolinate reductase"/>
    <property type="evidence" value="ECO:0007669"/>
    <property type="project" value="UniProtKB-EC"/>
</dbReference>
<dbReference type="GO" id="GO:0051287">
    <property type="term" value="F:NAD binding"/>
    <property type="evidence" value="ECO:0007669"/>
    <property type="project" value="UniProtKB-UniRule"/>
</dbReference>
<dbReference type="GO" id="GO:0050661">
    <property type="term" value="F:NADP binding"/>
    <property type="evidence" value="ECO:0007669"/>
    <property type="project" value="UniProtKB-UniRule"/>
</dbReference>
<dbReference type="GO" id="GO:0016726">
    <property type="term" value="F:oxidoreductase activity, acting on CH or CH2 groups, NAD or NADP as acceptor"/>
    <property type="evidence" value="ECO:0007669"/>
    <property type="project" value="UniProtKB-UniRule"/>
</dbReference>
<dbReference type="GO" id="GO:0019877">
    <property type="term" value="P:diaminopimelate biosynthetic process"/>
    <property type="evidence" value="ECO:0007669"/>
    <property type="project" value="UniProtKB-UniRule"/>
</dbReference>
<dbReference type="GO" id="GO:0009089">
    <property type="term" value="P:lysine biosynthetic process via diaminopimelate"/>
    <property type="evidence" value="ECO:0007669"/>
    <property type="project" value="UniProtKB-UniRule"/>
</dbReference>
<dbReference type="CDD" id="cd02274">
    <property type="entry name" value="DHDPR_N"/>
    <property type="match status" value="1"/>
</dbReference>
<dbReference type="Gene3D" id="3.30.360.10">
    <property type="entry name" value="Dihydrodipicolinate Reductase, domain 2"/>
    <property type="match status" value="1"/>
</dbReference>
<dbReference type="Gene3D" id="3.40.50.720">
    <property type="entry name" value="NAD(P)-binding Rossmann-like Domain"/>
    <property type="match status" value="1"/>
</dbReference>
<dbReference type="HAMAP" id="MF_00102">
    <property type="entry name" value="DapB"/>
    <property type="match status" value="1"/>
</dbReference>
<dbReference type="InterPro" id="IPR022663">
    <property type="entry name" value="DapB_C"/>
</dbReference>
<dbReference type="InterPro" id="IPR000846">
    <property type="entry name" value="DapB_N"/>
</dbReference>
<dbReference type="InterPro" id="IPR023940">
    <property type="entry name" value="DHDPR_bac"/>
</dbReference>
<dbReference type="InterPro" id="IPR036291">
    <property type="entry name" value="NAD(P)-bd_dom_sf"/>
</dbReference>
<dbReference type="PANTHER" id="PTHR20836:SF7">
    <property type="entry name" value="4-HYDROXY-TETRAHYDRODIPICOLINATE REDUCTASE"/>
    <property type="match status" value="1"/>
</dbReference>
<dbReference type="PANTHER" id="PTHR20836">
    <property type="entry name" value="DIHYDRODIPICOLINATE REDUCTASE"/>
    <property type="match status" value="1"/>
</dbReference>
<dbReference type="Pfam" id="PF05173">
    <property type="entry name" value="DapB_C"/>
    <property type="match status" value="1"/>
</dbReference>
<dbReference type="Pfam" id="PF01113">
    <property type="entry name" value="DapB_N"/>
    <property type="match status" value="1"/>
</dbReference>
<dbReference type="PIRSF" id="PIRSF000161">
    <property type="entry name" value="DHPR"/>
    <property type="match status" value="1"/>
</dbReference>
<dbReference type="SUPFAM" id="SSF55347">
    <property type="entry name" value="Glyceraldehyde-3-phosphate dehydrogenase-like, C-terminal domain"/>
    <property type="match status" value="1"/>
</dbReference>
<dbReference type="SUPFAM" id="SSF51735">
    <property type="entry name" value="NAD(P)-binding Rossmann-fold domains"/>
    <property type="match status" value="1"/>
</dbReference>
<organism>
    <name type="scientific">Bdellovibrio bacteriovorus (strain ATCC 15356 / DSM 50701 / NCIMB 9529 / HD100)</name>
    <dbReference type="NCBI Taxonomy" id="264462"/>
    <lineage>
        <taxon>Bacteria</taxon>
        <taxon>Pseudomonadati</taxon>
        <taxon>Bdellovibrionota</taxon>
        <taxon>Bdellovibrionia</taxon>
        <taxon>Bdellovibrionales</taxon>
        <taxon>Pseudobdellovibrionaceae</taxon>
        <taxon>Bdellovibrio</taxon>
    </lineage>
</organism>
<proteinExistence type="inferred from homology"/>
<protein>
    <recommendedName>
        <fullName evidence="1">4-hydroxy-tetrahydrodipicolinate reductase</fullName>
        <shortName evidence="1">HTPA reductase</shortName>
        <ecNumber evidence="1">1.17.1.8</ecNumber>
    </recommendedName>
</protein>